<keyword id="KW-1015">Disulfide bond</keyword>
<keyword id="KW-0325">Glycoprotein</keyword>
<keyword id="KW-0328">Glycosyltransferase</keyword>
<keyword id="KW-0333">Golgi apparatus</keyword>
<keyword id="KW-0430">Lectin</keyword>
<keyword id="KW-0464">Manganese</keyword>
<keyword id="KW-0472">Membrane</keyword>
<keyword id="KW-0479">Metal-binding</keyword>
<keyword id="KW-1185">Reference proteome</keyword>
<keyword id="KW-0735">Signal-anchor</keyword>
<keyword id="KW-0808">Transferase</keyword>
<keyword id="KW-0812">Transmembrane</keyword>
<keyword id="KW-1133">Transmembrane helix</keyword>
<feature type="chain" id="PRO_0000059160" description="N-acetylgalactosaminyltransferase 6">
    <location>
        <begin position="1"/>
        <end position="666"/>
    </location>
</feature>
<feature type="topological domain" description="Cytoplasmic" evidence="2">
    <location>
        <begin position="1"/>
        <end position="11"/>
    </location>
</feature>
<feature type="transmembrane region" description="Helical; Signal-anchor for type II membrane protein" evidence="2">
    <location>
        <begin position="12"/>
        <end position="31"/>
    </location>
</feature>
<feature type="topological domain" description="Lumenal" evidence="2">
    <location>
        <begin position="32"/>
        <end position="666"/>
    </location>
</feature>
<feature type="domain" description="Ricin B-type lectin" evidence="3">
    <location>
        <begin position="518"/>
        <end position="648"/>
    </location>
</feature>
<feature type="region of interest" description="Disordered" evidence="4">
    <location>
        <begin position="90"/>
        <end position="126"/>
    </location>
</feature>
<feature type="region of interest" description="Catalytic subdomain A">
    <location>
        <begin position="201"/>
        <end position="311"/>
    </location>
</feature>
<feature type="region of interest" description="Catalytic subdomain B">
    <location>
        <begin position="367"/>
        <end position="429"/>
    </location>
</feature>
<feature type="compositionally biased region" description="Low complexity" evidence="4">
    <location>
        <begin position="107"/>
        <end position="120"/>
    </location>
</feature>
<feature type="binding site" evidence="1">
    <location>
        <position position="242"/>
    </location>
    <ligand>
        <name>substrate</name>
    </ligand>
</feature>
<feature type="binding site" evidence="1">
    <location>
        <position position="272"/>
    </location>
    <ligand>
        <name>substrate</name>
    </ligand>
</feature>
<feature type="binding site" evidence="1">
    <location>
        <position position="295"/>
    </location>
    <ligand>
        <name>Mn(2+)</name>
        <dbReference type="ChEBI" id="CHEBI:29035"/>
    </ligand>
</feature>
<feature type="binding site" evidence="1">
    <location>
        <position position="296"/>
    </location>
    <ligand>
        <name>substrate</name>
    </ligand>
</feature>
<feature type="binding site" evidence="1">
    <location>
        <position position="297"/>
    </location>
    <ligand>
        <name>Mn(2+)</name>
        <dbReference type="ChEBI" id="CHEBI:29035"/>
    </ligand>
</feature>
<feature type="binding site" evidence="1">
    <location>
        <position position="398"/>
    </location>
    <ligand>
        <name>substrate</name>
    </ligand>
</feature>
<feature type="binding site" evidence="1">
    <location>
        <position position="426"/>
    </location>
    <ligand>
        <name>Mn(2+)</name>
        <dbReference type="ChEBI" id="CHEBI:29035"/>
    </ligand>
</feature>
<feature type="binding site" evidence="1">
    <location>
        <position position="429"/>
    </location>
    <ligand>
        <name>substrate</name>
    </ligand>
</feature>
<feature type="glycosylation site" description="N-linked (GlcNAc...) asparagine" evidence="2">
    <location>
        <position position="181"/>
    </location>
</feature>
<feature type="glycosylation site" description="N-linked (GlcNAc...) asparagine" evidence="2">
    <location>
        <position position="285"/>
    </location>
</feature>
<feature type="glycosylation site" description="N-linked (GlcNAc...) asparagine" evidence="2">
    <location>
        <position position="651"/>
    </location>
</feature>
<feature type="glycosylation site" description="N-linked (GlcNAc...) asparagine" evidence="2">
    <location>
        <position position="657"/>
    </location>
</feature>
<feature type="disulfide bond" evidence="3">
    <location>
        <begin position="192"/>
        <end position="421"/>
    </location>
</feature>
<feature type="disulfide bond" evidence="3">
    <location>
        <begin position="412"/>
        <end position="491"/>
    </location>
</feature>
<feature type="disulfide bond" evidence="3">
    <location>
        <begin position="531"/>
        <end position="548"/>
    </location>
</feature>
<feature type="disulfide bond" evidence="3">
    <location>
        <begin position="577"/>
        <end position="594"/>
    </location>
</feature>
<feature type="disulfide bond" evidence="3">
    <location>
        <begin position="621"/>
        <end position="636"/>
    </location>
</feature>
<feature type="sequence conflict" description="In Ref. 1; AAQ56703." evidence="9" ref="1">
    <original>EV</original>
    <variation>DA</variation>
    <location>
        <begin position="95"/>
        <end position="96"/>
    </location>
</feature>
<feature type="sequence conflict" description="In Ref. 1; AAQ56703 and 4; AAL29177." evidence="9" ref="1 4">
    <original>Q</original>
    <variation>R</variation>
    <location>
        <position position="107"/>
    </location>
</feature>
<feature type="sequence conflict" description="In Ref. 4; AAL29177." evidence="9" ref="4">
    <original>E</original>
    <variation>K</variation>
    <location>
        <position position="499"/>
    </location>
</feature>
<name>GALT6_DROME</name>
<organism>
    <name type="scientific">Drosophila melanogaster</name>
    <name type="common">Fruit fly</name>
    <dbReference type="NCBI Taxonomy" id="7227"/>
    <lineage>
        <taxon>Eukaryota</taxon>
        <taxon>Metazoa</taxon>
        <taxon>Ecdysozoa</taxon>
        <taxon>Arthropoda</taxon>
        <taxon>Hexapoda</taxon>
        <taxon>Insecta</taxon>
        <taxon>Pterygota</taxon>
        <taxon>Neoptera</taxon>
        <taxon>Endopterygota</taxon>
        <taxon>Diptera</taxon>
        <taxon>Brachycera</taxon>
        <taxon>Muscomorpha</taxon>
        <taxon>Ephydroidea</taxon>
        <taxon>Drosophilidae</taxon>
        <taxon>Drosophila</taxon>
        <taxon>Sophophora</taxon>
    </lineage>
</organism>
<protein>
    <recommendedName>
        <fullName>N-acetylgalactosaminyltransferase 6</fullName>
        <ecNumber evidence="5">2.4.1.41</ecNumber>
    </recommendedName>
    <alternativeName>
        <fullName>Protein-UDP acetylgalactosaminyltransferase 6</fullName>
    </alternativeName>
    <alternativeName>
        <fullName>UDP-GalNAc:polypeptide N-acetylgalactosaminyltransferase 6</fullName>
        <shortName>pp-GaNTase 6</shortName>
    </alternativeName>
</protein>
<dbReference type="EC" id="2.4.1.41" evidence="5"/>
<dbReference type="EMBL" id="AY268067">
    <property type="protein sequence ID" value="AAQ56703.1"/>
    <property type="molecule type" value="mRNA"/>
</dbReference>
<dbReference type="EMBL" id="AE014296">
    <property type="protein sequence ID" value="AAF47689.1"/>
    <property type="molecule type" value="Genomic_DNA"/>
</dbReference>
<dbReference type="EMBL" id="AE014296">
    <property type="protein sequence ID" value="AAF47690.1"/>
    <property type="molecule type" value="Genomic_DNA"/>
</dbReference>
<dbReference type="EMBL" id="AY061629">
    <property type="protein sequence ID" value="AAL29177.1"/>
    <property type="molecule type" value="mRNA"/>
</dbReference>
<dbReference type="RefSeq" id="NP_001261342.1">
    <property type="nucleotide sequence ID" value="NM_001274413.1"/>
</dbReference>
<dbReference type="RefSeq" id="NP_647749.2">
    <property type="nucleotide sequence ID" value="NM_139492.3"/>
</dbReference>
<dbReference type="RefSeq" id="NP_728779.1">
    <property type="nucleotide sequence ID" value="NM_167966.2"/>
</dbReference>
<dbReference type="SMR" id="Q6WV16"/>
<dbReference type="BioGRID" id="63848">
    <property type="interactions" value="4"/>
</dbReference>
<dbReference type="FunCoup" id="Q6WV16">
    <property type="interactions" value="877"/>
</dbReference>
<dbReference type="STRING" id="7227.FBpp0072843"/>
<dbReference type="CAZy" id="CBM13">
    <property type="family name" value="Carbohydrate-Binding Module Family 13"/>
</dbReference>
<dbReference type="CAZy" id="GT27">
    <property type="family name" value="Glycosyltransferase Family 27"/>
</dbReference>
<dbReference type="GlyCosmos" id="Q6WV16">
    <property type="glycosylation" value="4 sites, No reported glycans"/>
</dbReference>
<dbReference type="GlyGen" id="Q6WV16">
    <property type="glycosylation" value="4 sites"/>
</dbReference>
<dbReference type="PaxDb" id="7227-FBpp0072842"/>
<dbReference type="EnsemblMetazoa" id="FBtr0072972">
    <property type="protein sequence ID" value="FBpp0072842"/>
    <property type="gene ID" value="FBgn0035375"/>
</dbReference>
<dbReference type="EnsemblMetazoa" id="FBtr0072973">
    <property type="protein sequence ID" value="FBpp0072843"/>
    <property type="gene ID" value="FBgn0035375"/>
</dbReference>
<dbReference type="EnsemblMetazoa" id="FBtr0333442">
    <property type="protein sequence ID" value="FBpp0305633"/>
    <property type="gene ID" value="FBgn0035375"/>
</dbReference>
<dbReference type="GeneID" id="38346"/>
<dbReference type="KEGG" id="dme:Dmel_CG2103"/>
<dbReference type="AGR" id="FB:FBgn0035375"/>
<dbReference type="CTD" id="38346"/>
<dbReference type="FlyBase" id="FBgn0035375">
    <property type="gene designation" value="Pgant6"/>
</dbReference>
<dbReference type="VEuPathDB" id="VectorBase:FBgn0035375"/>
<dbReference type="eggNOG" id="KOG3736">
    <property type="taxonomic scope" value="Eukaryota"/>
</dbReference>
<dbReference type="GeneTree" id="ENSGT00940000166027"/>
<dbReference type="HOGENOM" id="CLU_013477_0_1_1"/>
<dbReference type="InParanoid" id="Q6WV16"/>
<dbReference type="OMA" id="KTQFWEL"/>
<dbReference type="OrthoDB" id="6159198at2759"/>
<dbReference type="PhylomeDB" id="Q6WV16"/>
<dbReference type="BRENDA" id="2.4.1.41">
    <property type="organism ID" value="1994"/>
</dbReference>
<dbReference type="Reactome" id="R-DME-913709">
    <property type="pathway name" value="O-linked glycosylation of mucins"/>
</dbReference>
<dbReference type="UniPathway" id="UPA00378"/>
<dbReference type="BioGRID-ORCS" id="38346">
    <property type="hits" value="0 hits in 3 CRISPR screens"/>
</dbReference>
<dbReference type="GenomeRNAi" id="38346"/>
<dbReference type="PRO" id="PR:Q6WV16"/>
<dbReference type="Proteomes" id="UP000000803">
    <property type="component" value="Chromosome 3L"/>
</dbReference>
<dbReference type="Bgee" id="FBgn0035375">
    <property type="expression patterns" value="Expressed in thoracico-abdominal ganglion (Drosophila) and 79 other cell types or tissues"/>
</dbReference>
<dbReference type="ExpressionAtlas" id="Q6WV16">
    <property type="expression patterns" value="baseline and differential"/>
</dbReference>
<dbReference type="GO" id="GO:0005783">
    <property type="term" value="C:endoplasmic reticulum"/>
    <property type="evidence" value="ECO:0000314"/>
    <property type="project" value="FlyBase"/>
</dbReference>
<dbReference type="GO" id="GO:0005794">
    <property type="term" value="C:Golgi apparatus"/>
    <property type="evidence" value="ECO:0000318"/>
    <property type="project" value="GO_Central"/>
</dbReference>
<dbReference type="GO" id="GO:0000139">
    <property type="term" value="C:Golgi membrane"/>
    <property type="evidence" value="ECO:0000304"/>
    <property type="project" value="FlyBase"/>
</dbReference>
<dbReference type="GO" id="GO:0005795">
    <property type="term" value="C:Golgi stack"/>
    <property type="evidence" value="ECO:0000303"/>
    <property type="project" value="UniProtKB"/>
</dbReference>
<dbReference type="GO" id="GO:0030246">
    <property type="term" value="F:carbohydrate binding"/>
    <property type="evidence" value="ECO:0007669"/>
    <property type="project" value="UniProtKB-KW"/>
</dbReference>
<dbReference type="GO" id="GO:0046872">
    <property type="term" value="F:metal ion binding"/>
    <property type="evidence" value="ECO:0007669"/>
    <property type="project" value="UniProtKB-KW"/>
</dbReference>
<dbReference type="GO" id="GO:0004653">
    <property type="term" value="F:polypeptide N-acetylgalactosaminyltransferase activity"/>
    <property type="evidence" value="ECO:0000314"/>
    <property type="project" value="UniProtKB"/>
</dbReference>
<dbReference type="GO" id="GO:0006493">
    <property type="term" value="P:protein O-linked glycosylation"/>
    <property type="evidence" value="ECO:0000314"/>
    <property type="project" value="UniProtKB"/>
</dbReference>
<dbReference type="CDD" id="cd23462">
    <property type="entry name" value="beta-trefoil_Ricin_Pgant9-like"/>
    <property type="match status" value="1"/>
</dbReference>
<dbReference type="CDD" id="cd02510">
    <property type="entry name" value="pp-GalNAc-T"/>
    <property type="match status" value="1"/>
</dbReference>
<dbReference type="FunFam" id="2.80.10.50:FF:000011">
    <property type="entry name" value="Polypeptide N-acetylgalactosaminyltransferase"/>
    <property type="match status" value="1"/>
</dbReference>
<dbReference type="FunFam" id="3.90.550.10:FF:000029">
    <property type="entry name" value="Polypeptide N-acetylgalactosaminyltransferase"/>
    <property type="match status" value="1"/>
</dbReference>
<dbReference type="Gene3D" id="2.80.10.50">
    <property type="match status" value="1"/>
</dbReference>
<dbReference type="Gene3D" id="3.90.550.10">
    <property type="entry name" value="Spore Coat Polysaccharide Biosynthesis Protein SpsA, Chain A"/>
    <property type="match status" value="1"/>
</dbReference>
<dbReference type="InterPro" id="IPR045885">
    <property type="entry name" value="GalNAc-T"/>
</dbReference>
<dbReference type="InterPro" id="IPR001173">
    <property type="entry name" value="Glyco_trans_2-like"/>
</dbReference>
<dbReference type="InterPro" id="IPR029044">
    <property type="entry name" value="Nucleotide-diphossugar_trans"/>
</dbReference>
<dbReference type="InterPro" id="IPR035992">
    <property type="entry name" value="Ricin_B-like_lectins"/>
</dbReference>
<dbReference type="InterPro" id="IPR000772">
    <property type="entry name" value="Ricin_B_lectin"/>
</dbReference>
<dbReference type="PANTHER" id="PTHR11675">
    <property type="entry name" value="N-ACETYLGALACTOSAMINYLTRANSFERASE"/>
    <property type="match status" value="1"/>
</dbReference>
<dbReference type="PANTHER" id="PTHR11675:SF134">
    <property type="entry name" value="N-ACETYLGALACTOSAMINYLTRANSFERASE 4-RELATED"/>
    <property type="match status" value="1"/>
</dbReference>
<dbReference type="Pfam" id="PF00535">
    <property type="entry name" value="Glycos_transf_2"/>
    <property type="match status" value="1"/>
</dbReference>
<dbReference type="Pfam" id="PF00652">
    <property type="entry name" value="Ricin_B_lectin"/>
    <property type="match status" value="1"/>
</dbReference>
<dbReference type="SMART" id="SM00458">
    <property type="entry name" value="RICIN"/>
    <property type="match status" value="1"/>
</dbReference>
<dbReference type="SUPFAM" id="SSF53448">
    <property type="entry name" value="Nucleotide-diphospho-sugar transferases"/>
    <property type="match status" value="1"/>
</dbReference>
<dbReference type="SUPFAM" id="SSF50370">
    <property type="entry name" value="Ricin B-like lectins"/>
    <property type="match status" value="1"/>
</dbReference>
<dbReference type="PROSITE" id="PS50231">
    <property type="entry name" value="RICIN_B_LECTIN"/>
    <property type="match status" value="1"/>
</dbReference>
<comment type="function">
    <text evidence="5 7">Glycopeptide transferase involved in O-linked oligosaccharide biosynthesis, which catalyzes the transfer of an N-acetyl-D-galactosamine residue to an already glycosylated peptide (PubMed:12829714). In contrast to other proteins of the family, it does not act as a peptide transferase that transfers GalNAc onto serine or threonine residue on the protein receptor, but instead requires the prior addition of a GalNAc on a peptide before adding additional GalNAc moieties (PubMed:12829714). Some peptide transferase activity is however not excluded, considering that its appropriate peptide substrate may remain unidentified (PubMed:12829714). Prefers the diglycosylated Muc5AC-3/13 as substrate (PubMed:12829714). Might have a role in protein O-glycosylation in the Golgi and thereby in establishing and/or maintaining a proper secretory apparatus structure (PubMed:20807760).</text>
</comment>
<comment type="catalytic activity">
    <reaction evidence="5">
        <text>L-seryl-[protein] + UDP-N-acetyl-alpha-D-galactosamine = a 3-O-[N-acetyl-alpha-D-galactosaminyl]-L-seryl-[protein] + UDP + H(+)</text>
        <dbReference type="Rhea" id="RHEA:23956"/>
        <dbReference type="Rhea" id="RHEA-COMP:9863"/>
        <dbReference type="Rhea" id="RHEA-COMP:12788"/>
        <dbReference type="ChEBI" id="CHEBI:15378"/>
        <dbReference type="ChEBI" id="CHEBI:29999"/>
        <dbReference type="ChEBI" id="CHEBI:53604"/>
        <dbReference type="ChEBI" id="CHEBI:58223"/>
        <dbReference type="ChEBI" id="CHEBI:67138"/>
        <dbReference type="EC" id="2.4.1.41"/>
    </reaction>
</comment>
<comment type="catalytic activity">
    <reaction evidence="5">
        <text>L-threonyl-[protein] + UDP-N-acetyl-alpha-D-galactosamine = a 3-O-[N-acetyl-alpha-D-galactosaminyl]-L-threonyl-[protein] + UDP + H(+)</text>
        <dbReference type="Rhea" id="RHEA:52424"/>
        <dbReference type="Rhea" id="RHEA-COMP:11060"/>
        <dbReference type="Rhea" id="RHEA-COMP:11689"/>
        <dbReference type="ChEBI" id="CHEBI:15378"/>
        <dbReference type="ChEBI" id="CHEBI:30013"/>
        <dbReference type="ChEBI" id="CHEBI:58223"/>
        <dbReference type="ChEBI" id="CHEBI:67138"/>
        <dbReference type="ChEBI" id="CHEBI:87075"/>
        <dbReference type="EC" id="2.4.1.41"/>
    </reaction>
</comment>
<comment type="cofactor">
    <cofactor evidence="1">
        <name>Mn(2+)</name>
        <dbReference type="ChEBI" id="CHEBI:29035"/>
    </cofactor>
</comment>
<comment type="pathway">
    <text evidence="10">Protein modification; protein glycosylation.</text>
</comment>
<comment type="subcellular location">
    <subcellularLocation>
        <location evidence="1">Golgi apparatus membrane</location>
        <topology evidence="1">Single-pass type II membrane protein</topology>
    </subcellularLocation>
</comment>
<comment type="tissue specificity">
    <text evidence="5 6">Expressed during oogenesis, in the somatically derived follicle cells that surround the developing oocyte, which are involved in the maturation of the oocyte and construction of the egg shell, as well as playing a role in subsequent embryonic pattern formation. Expressed in the salivary glands from embryonic stage 12 onwards, becoming stronger at stage 13. During embryonic stages 12-13, also expressed in the posterior midgut and hindgut. During embryonic stages 14-15, expression continues in the hindgut. Expression is detected in the epidermis and antennomaxillary complex during embryonic stages 16-17. In third instar larvae, ubiquitously expressed in wing, eye-antennal, leg and haltere imaginal disks.</text>
</comment>
<comment type="developmental stage">
    <text evidence="5 6">Expressed throughout embryonic, larval, pupal and adult stages, with increasing levels during larval development. Transcripts first detected during embryonic stages 12-13.</text>
</comment>
<comment type="domain">
    <text evidence="1">There are two conserved domains in the glycosyltransferase region: the N-terminal domain (domain A, also called GT1 motif), which is probably involved in manganese coordination and substrate binding and the C-terminal domain (domain B, also called Gal/GalNAc-T motif), which is probably involved in catalytic reaction and UDP-Gal binding.</text>
</comment>
<comment type="domain">
    <text evidence="1">The ricin B-type lectin domain binds to GalNAc and contributes to the glycopeptide specificity.</text>
</comment>
<comment type="disruption phenotype">
    <text evidence="8">RNAi-mediated knockdown reduces viability.</text>
</comment>
<comment type="similarity">
    <text evidence="9">Belongs to the glycosyltransferase 2 family. GalNAc-T subfamily.</text>
</comment>
<reference key="1">
    <citation type="journal article" date="2003" name="J. Biol. Chem.">
        <title>Functional characterization and expression analysis of members of the UDP-GalNAc:polypeptide N-acetylgalactosaminyltransferase family from Drosophila melanogaster.</title>
        <authorList>
            <person name="Ten Hagen K.G."/>
            <person name="Tran D.T."/>
            <person name="Gerken T.A."/>
            <person name="Stein D.S."/>
            <person name="Zhang Z."/>
        </authorList>
    </citation>
    <scope>NUCLEOTIDE SEQUENCE [MRNA]</scope>
    <scope>FUNCTION</scope>
    <scope>CATALYTIC ACTIVITY</scope>
    <scope>PATHWAY</scope>
    <scope>TISSUE SPECIFICITY</scope>
    <scope>DEVELOPMENTAL STAGE</scope>
    <source>
        <strain>Canton-S</strain>
        <tissue>Embryo</tissue>
    </source>
</reference>
<reference key="2">
    <citation type="journal article" date="2000" name="Science">
        <title>The genome sequence of Drosophila melanogaster.</title>
        <authorList>
            <person name="Adams M.D."/>
            <person name="Celniker S.E."/>
            <person name="Holt R.A."/>
            <person name="Evans C.A."/>
            <person name="Gocayne J.D."/>
            <person name="Amanatides P.G."/>
            <person name="Scherer S.E."/>
            <person name="Li P.W."/>
            <person name="Hoskins R.A."/>
            <person name="Galle R.F."/>
            <person name="George R.A."/>
            <person name="Lewis S.E."/>
            <person name="Richards S."/>
            <person name="Ashburner M."/>
            <person name="Henderson S.N."/>
            <person name="Sutton G.G."/>
            <person name="Wortman J.R."/>
            <person name="Yandell M.D."/>
            <person name="Zhang Q."/>
            <person name="Chen L.X."/>
            <person name="Brandon R.C."/>
            <person name="Rogers Y.-H.C."/>
            <person name="Blazej R.G."/>
            <person name="Champe M."/>
            <person name="Pfeiffer B.D."/>
            <person name="Wan K.H."/>
            <person name="Doyle C."/>
            <person name="Baxter E.G."/>
            <person name="Helt G."/>
            <person name="Nelson C.R."/>
            <person name="Miklos G.L.G."/>
            <person name="Abril J.F."/>
            <person name="Agbayani A."/>
            <person name="An H.-J."/>
            <person name="Andrews-Pfannkoch C."/>
            <person name="Baldwin D."/>
            <person name="Ballew R.M."/>
            <person name="Basu A."/>
            <person name="Baxendale J."/>
            <person name="Bayraktaroglu L."/>
            <person name="Beasley E.M."/>
            <person name="Beeson K.Y."/>
            <person name="Benos P.V."/>
            <person name="Berman B.P."/>
            <person name="Bhandari D."/>
            <person name="Bolshakov S."/>
            <person name="Borkova D."/>
            <person name="Botchan M.R."/>
            <person name="Bouck J."/>
            <person name="Brokstein P."/>
            <person name="Brottier P."/>
            <person name="Burtis K.C."/>
            <person name="Busam D.A."/>
            <person name="Butler H."/>
            <person name="Cadieu E."/>
            <person name="Center A."/>
            <person name="Chandra I."/>
            <person name="Cherry J.M."/>
            <person name="Cawley S."/>
            <person name="Dahlke C."/>
            <person name="Davenport L.B."/>
            <person name="Davies P."/>
            <person name="de Pablos B."/>
            <person name="Delcher A."/>
            <person name="Deng Z."/>
            <person name="Mays A.D."/>
            <person name="Dew I."/>
            <person name="Dietz S.M."/>
            <person name="Dodson K."/>
            <person name="Doup L.E."/>
            <person name="Downes M."/>
            <person name="Dugan-Rocha S."/>
            <person name="Dunkov B.C."/>
            <person name="Dunn P."/>
            <person name="Durbin K.J."/>
            <person name="Evangelista C.C."/>
            <person name="Ferraz C."/>
            <person name="Ferriera S."/>
            <person name="Fleischmann W."/>
            <person name="Fosler C."/>
            <person name="Gabrielian A.E."/>
            <person name="Garg N.S."/>
            <person name="Gelbart W.M."/>
            <person name="Glasser K."/>
            <person name="Glodek A."/>
            <person name="Gong F."/>
            <person name="Gorrell J.H."/>
            <person name="Gu Z."/>
            <person name="Guan P."/>
            <person name="Harris M."/>
            <person name="Harris N.L."/>
            <person name="Harvey D.A."/>
            <person name="Heiman T.J."/>
            <person name="Hernandez J.R."/>
            <person name="Houck J."/>
            <person name="Hostin D."/>
            <person name="Houston K.A."/>
            <person name="Howland T.J."/>
            <person name="Wei M.-H."/>
            <person name="Ibegwam C."/>
            <person name="Jalali M."/>
            <person name="Kalush F."/>
            <person name="Karpen G.H."/>
            <person name="Ke Z."/>
            <person name="Kennison J.A."/>
            <person name="Ketchum K.A."/>
            <person name="Kimmel B.E."/>
            <person name="Kodira C.D."/>
            <person name="Kraft C.L."/>
            <person name="Kravitz S."/>
            <person name="Kulp D."/>
            <person name="Lai Z."/>
            <person name="Lasko P."/>
            <person name="Lei Y."/>
            <person name="Levitsky A.A."/>
            <person name="Li J.H."/>
            <person name="Li Z."/>
            <person name="Liang Y."/>
            <person name="Lin X."/>
            <person name="Liu X."/>
            <person name="Mattei B."/>
            <person name="McIntosh T.C."/>
            <person name="McLeod M.P."/>
            <person name="McPherson D."/>
            <person name="Merkulov G."/>
            <person name="Milshina N.V."/>
            <person name="Mobarry C."/>
            <person name="Morris J."/>
            <person name="Moshrefi A."/>
            <person name="Mount S.M."/>
            <person name="Moy M."/>
            <person name="Murphy B."/>
            <person name="Murphy L."/>
            <person name="Muzny D.M."/>
            <person name="Nelson D.L."/>
            <person name="Nelson D.R."/>
            <person name="Nelson K.A."/>
            <person name="Nixon K."/>
            <person name="Nusskern D.R."/>
            <person name="Pacleb J.M."/>
            <person name="Palazzolo M."/>
            <person name="Pittman G.S."/>
            <person name="Pan S."/>
            <person name="Pollard J."/>
            <person name="Puri V."/>
            <person name="Reese M.G."/>
            <person name="Reinert K."/>
            <person name="Remington K."/>
            <person name="Saunders R.D.C."/>
            <person name="Scheeler F."/>
            <person name="Shen H."/>
            <person name="Shue B.C."/>
            <person name="Siden-Kiamos I."/>
            <person name="Simpson M."/>
            <person name="Skupski M.P."/>
            <person name="Smith T.J."/>
            <person name="Spier E."/>
            <person name="Spradling A.C."/>
            <person name="Stapleton M."/>
            <person name="Strong R."/>
            <person name="Sun E."/>
            <person name="Svirskas R."/>
            <person name="Tector C."/>
            <person name="Turner R."/>
            <person name="Venter E."/>
            <person name="Wang A.H."/>
            <person name="Wang X."/>
            <person name="Wang Z.-Y."/>
            <person name="Wassarman D.A."/>
            <person name="Weinstock G.M."/>
            <person name="Weissenbach J."/>
            <person name="Williams S.M."/>
            <person name="Woodage T."/>
            <person name="Worley K.C."/>
            <person name="Wu D."/>
            <person name="Yang S."/>
            <person name="Yao Q.A."/>
            <person name="Ye J."/>
            <person name="Yeh R.-F."/>
            <person name="Zaveri J.S."/>
            <person name="Zhan M."/>
            <person name="Zhang G."/>
            <person name="Zhao Q."/>
            <person name="Zheng L."/>
            <person name="Zheng X.H."/>
            <person name="Zhong F.N."/>
            <person name="Zhong W."/>
            <person name="Zhou X."/>
            <person name="Zhu S.C."/>
            <person name="Zhu X."/>
            <person name="Smith H.O."/>
            <person name="Gibbs R.A."/>
            <person name="Myers E.W."/>
            <person name="Rubin G.M."/>
            <person name="Venter J.C."/>
        </authorList>
    </citation>
    <scope>NUCLEOTIDE SEQUENCE [LARGE SCALE GENOMIC DNA]</scope>
    <source>
        <strain>Berkeley</strain>
    </source>
</reference>
<reference key="3">
    <citation type="journal article" date="2002" name="Genome Biol.">
        <title>Annotation of the Drosophila melanogaster euchromatic genome: a systematic review.</title>
        <authorList>
            <person name="Misra S."/>
            <person name="Crosby M.A."/>
            <person name="Mungall C.J."/>
            <person name="Matthews B.B."/>
            <person name="Campbell K.S."/>
            <person name="Hradecky P."/>
            <person name="Huang Y."/>
            <person name="Kaminker J.S."/>
            <person name="Millburn G.H."/>
            <person name="Prochnik S.E."/>
            <person name="Smith C.D."/>
            <person name="Tupy J.L."/>
            <person name="Whitfield E.J."/>
            <person name="Bayraktaroglu L."/>
            <person name="Berman B.P."/>
            <person name="Bettencourt B.R."/>
            <person name="Celniker S.E."/>
            <person name="de Grey A.D.N.J."/>
            <person name="Drysdale R.A."/>
            <person name="Harris N.L."/>
            <person name="Richter J."/>
            <person name="Russo S."/>
            <person name="Schroeder A.J."/>
            <person name="Shu S.Q."/>
            <person name="Stapleton M."/>
            <person name="Yamada C."/>
            <person name="Ashburner M."/>
            <person name="Gelbart W.M."/>
            <person name="Rubin G.M."/>
            <person name="Lewis S.E."/>
        </authorList>
    </citation>
    <scope>GENOME REANNOTATION</scope>
    <source>
        <strain>Berkeley</strain>
    </source>
</reference>
<reference key="4">
    <citation type="journal article" date="2002" name="Genome Biol.">
        <title>A Drosophila full-length cDNA resource.</title>
        <authorList>
            <person name="Stapleton M."/>
            <person name="Carlson J.W."/>
            <person name="Brokstein P."/>
            <person name="Yu C."/>
            <person name="Champe M."/>
            <person name="George R.A."/>
            <person name="Guarin H."/>
            <person name="Kronmiller B."/>
            <person name="Pacleb J.M."/>
            <person name="Park S."/>
            <person name="Wan K.H."/>
            <person name="Rubin G.M."/>
            <person name="Celniker S.E."/>
        </authorList>
    </citation>
    <scope>NUCLEOTIDE SEQUENCE [LARGE SCALE MRNA]</scope>
    <source>
        <strain>Berkeley</strain>
        <tissue>Embryo</tissue>
    </source>
</reference>
<reference key="5">
    <citation type="journal article" date="2006" name="Glycobiology">
        <title>Expression of the UDP-GalNAc: polypeptide N-acetylgalactosaminyltransferase family is spatially and temporally regulated during Drosophila development.</title>
        <authorList>
            <person name="Tian E."/>
            <person name="Ten Hagen K.G."/>
        </authorList>
    </citation>
    <scope>TISSUE SPECIFICITY</scope>
    <scope>DEVELOPMENTAL STAGE</scope>
</reference>
<reference key="6">
    <citation type="journal article" date="2010" name="J. Biol. Chem.">
        <title>Dissecting the biological role of mucin-type O-glycosylation using RNA interference in Drosophila cell culture.</title>
        <authorList>
            <person name="Zhang L."/>
            <person name="Ten Hagen K.G."/>
        </authorList>
    </citation>
    <scope>FUNCTION</scope>
</reference>
<reference key="7">
    <citation type="journal article" date="2012" name="J. Biol. Chem.">
        <title>Multiple members of the UDP-GalNAc: polypeptide N-acetylgalactosaminyltransferase family are essential for viability in Drosophila.</title>
        <authorList>
            <person name="Tran D.T."/>
            <person name="Zhang L."/>
            <person name="Zhang Y."/>
            <person name="Tian E."/>
            <person name="Earl L.A."/>
            <person name="Ten Hagen K.G."/>
        </authorList>
    </citation>
    <scope>DISRUPTION PHENOTYPE</scope>
</reference>
<proteinExistence type="evidence at protein level"/>
<evidence type="ECO:0000250" key="1"/>
<evidence type="ECO:0000255" key="2"/>
<evidence type="ECO:0000255" key="3">
    <source>
        <dbReference type="PROSITE-ProRule" id="PRU00174"/>
    </source>
</evidence>
<evidence type="ECO:0000256" key="4">
    <source>
        <dbReference type="SAM" id="MobiDB-lite"/>
    </source>
</evidence>
<evidence type="ECO:0000269" key="5">
    <source>
    </source>
</evidence>
<evidence type="ECO:0000269" key="6">
    <source>
    </source>
</evidence>
<evidence type="ECO:0000269" key="7">
    <source>
    </source>
</evidence>
<evidence type="ECO:0000269" key="8">
    <source>
    </source>
</evidence>
<evidence type="ECO:0000305" key="9"/>
<evidence type="ECO:0000305" key="10">
    <source>
    </source>
</evidence>
<evidence type="ECO:0000312" key="11">
    <source>
        <dbReference type="FlyBase" id="FBgn0035375"/>
    </source>
</evidence>
<gene>
    <name evidence="11" type="primary">Pgant6</name>
    <name evidence="11" type="ORF">CG2103</name>
</gene>
<sequence length="666" mass="76972">MRRPNLKWIVKASLLLLISLTLFVLITSWISSTPYTNKPVHHGVEPVPEKAGLSGDVKVKVPAIKQPEPQKPQEPDFEEDPELQKIDEPEPVEEEVDNPHPADDEPQQQPQEELQMAAPADASVKKDWHDYTFMEKDAKRVGLGEGGKASTLDDESQRDLEKRMSLENGFNALLSDSISVNRSVPDIRHPLCRKKEYVAKLPTVSVIIIFYNEYLSVLMRSVHSLINRSPPELMKEIILVDDHSDREYLGKELETYIAEHFKWVRVVRLPRRTGLIGARAAGARNATAEVLIFLDSHVEANYNWLPPLLEPIALNKRTAVCPFIDVIDHTNFHYRAQDEGARGAFDWEFFYKRLPLLPEDLKHPADPFKSPIMAGGLFAISREFFWELGGYDEGLDIWGGEQYELSFKIWMCGGEMYDAPCSRIGHIYRGPRNHQPSPRKGDYLHKNYKRVAEVWMDEYKNYLYSHGDGLYESVDPGDLTEQKAIRTKLNCKSFKWFMEEVAFDLMKTYPPVDPPSYAMGALQNVGNQNLCLDTLGRKKHNKMGMYACADNIKTPQRTQFWELSWKRDLRLRRKKECLDVQIWDANAPVWLWDCHSQGGNQYWYYDYRHKQLKHGTEGRRCLELLPFSQEVVANKCDTDNRFQQWNFGSFNKTALDNYSQDLVLSL</sequence>
<accession>Q6WV16</accession>
<accession>Q0E8I9</accession>
<accession>Q95R40</accession>
<accession>Q9VZX5</accession>